<sequence length="484" mass="51638">MTKAIMLQGTGSDVGKTVLVAGLCRLFANRGVRVRPFKPQNMSNNAAVAEDGGEIGRAQWLQSLAARVPSSVHMNPVLLKPQSETGSQIIVQGKVWGHAKGRDYQALKPQLLGAVLESFATMRAGTDLVIVEGAGSPAEINLRQGDIANMGFATRANVPVVLVGDIDRGGVIASLVGTYHILPEEDRRMIRGYIINKFRGDVSLFGTGIEAIGGFTGWPCHGIVPWLKAAGRLPPEDSVVLERLARGSDGALKIAVPVLPRIANFDDFDPLRAEPDVDLVFVRAGERLPADAGLVILPGSKSTIGDLMDLRAQGWDRDITAHVRRGGRVIGICGGYQMLGRMVHDPLGIEGSVTETPGLGLLDVETEMAPEKTVRNSTALSTEYDAPLSGYEIHLGVTRGKDCDRPSTVIDGRPDGARSGDGLIMGTYLHGLFCSDAYRAKLLASFGLSGERMDYRASVETALDEIATELEAVLDPAWLDSLAG</sequence>
<feature type="chain" id="PRO_1000116896" description="Cobyric acid synthase">
    <location>
        <begin position="1"/>
        <end position="484"/>
    </location>
</feature>
<feature type="domain" description="GATase cobBQ-type" evidence="1">
    <location>
        <begin position="251"/>
        <end position="438"/>
    </location>
</feature>
<feature type="active site" description="Nucleophile" evidence="1">
    <location>
        <position position="333"/>
    </location>
</feature>
<feature type="active site" evidence="1">
    <location>
        <position position="430"/>
    </location>
</feature>
<name>COBQ_RHIR8</name>
<accession>B9JGD3</accession>
<organism>
    <name type="scientific">Rhizobium rhizogenes (strain K84 / ATCC BAA-868)</name>
    <name type="common">Agrobacterium radiobacter</name>
    <dbReference type="NCBI Taxonomy" id="311403"/>
    <lineage>
        <taxon>Bacteria</taxon>
        <taxon>Pseudomonadati</taxon>
        <taxon>Pseudomonadota</taxon>
        <taxon>Alphaproteobacteria</taxon>
        <taxon>Hyphomicrobiales</taxon>
        <taxon>Rhizobiaceae</taxon>
        <taxon>Rhizobium/Agrobacterium group</taxon>
        <taxon>Rhizobium</taxon>
    </lineage>
</organism>
<dbReference type="EMBL" id="CP000628">
    <property type="protein sequence ID" value="ACM26908.1"/>
    <property type="molecule type" value="Genomic_DNA"/>
</dbReference>
<dbReference type="RefSeq" id="WP_012651706.1">
    <property type="nucleotide sequence ID" value="NC_011985.1"/>
</dbReference>
<dbReference type="SMR" id="B9JGD3"/>
<dbReference type="STRING" id="311403.Arad_2802"/>
<dbReference type="KEGG" id="ara:Arad_2802"/>
<dbReference type="eggNOG" id="COG1492">
    <property type="taxonomic scope" value="Bacteria"/>
</dbReference>
<dbReference type="HOGENOM" id="CLU_019250_2_2_5"/>
<dbReference type="UniPathway" id="UPA00148"/>
<dbReference type="Proteomes" id="UP000001600">
    <property type="component" value="Chromosome 1"/>
</dbReference>
<dbReference type="GO" id="GO:0015420">
    <property type="term" value="F:ABC-type vitamin B12 transporter activity"/>
    <property type="evidence" value="ECO:0007669"/>
    <property type="project" value="UniProtKB-UniRule"/>
</dbReference>
<dbReference type="GO" id="GO:0003824">
    <property type="term" value="F:catalytic activity"/>
    <property type="evidence" value="ECO:0007669"/>
    <property type="project" value="InterPro"/>
</dbReference>
<dbReference type="GO" id="GO:0009236">
    <property type="term" value="P:cobalamin biosynthetic process"/>
    <property type="evidence" value="ECO:0007669"/>
    <property type="project" value="UniProtKB-UniRule"/>
</dbReference>
<dbReference type="CDD" id="cd05389">
    <property type="entry name" value="CobQ_N"/>
    <property type="match status" value="1"/>
</dbReference>
<dbReference type="CDD" id="cd01750">
    <property type="entry name" value="GATase1_CobQ"/>
    <property type="match status" value="1"/>
</dbReference>
<dbReference type="Gene3D" id="3.40.50.880">
    <property type="match status" value="1"/>
</dbReference>
<dbReference type="Gene3D" id="3.40.50.300">
    <property type="entry name" value="P-loop containing nucleotide triphosphate hydrolases"/>
    <property type="match status" value="1"/>
</dbReference>
<dbReference type="HAMAP" id="MF_00028">
    <property type="entry name" value="CobQ"/>
    <property type="match status" value="1"/>
</dbReference>
<dbReference type="InterPro" id="IPR029062">
    <property type="entry name" value="Class_I_gatase-like"/>
</dbReference>
<dbReference type="InterPro" id="IPR002586">
    <property type="entry name" value="CobQ/CobB/MinD/ParA_Nub-bd_dom"/>
</dbReference>
<dbReference type="InterPro" id="IPR033949">
    <property type="entry name" value="CobQ_GATase1"/>
</dbReference>
<dbReference type="InterPro" id="IPR047045">
    <property type="entry name" value="CobQ_N"/>
</dbReference>
<dbReference type="InterPro" id="IPR004459">
    <property type="entry name" value="CobQ_synth"/>
</dbReference>
<dbReference type="InterPro" id="IPR011698">
    <property type="entry name" value="GATase_3"/>
</dbReference>
<dbReference type="InterPro" id="IPR027417">
    <property type="entry name" value="P-loop_NTPase"/>
</dbReference>
<dbReference type="NCBIfam" id="TIGR00313">
    <property type="entry name" value="cobQ"/>
    <property type="match status" value="1"/>
</dbReference>
<dbReference type="NCBIfam" id="NF001989">
    <property type="entry name" value="PRK00784.1"/>
    <property type="match status" value="1"/>
</dbReference>
<dbReference type="PANTHER" id="PTHR21343:SF1">
    <property type="entry name" value="COBYRIC ACID SYNTHASE"/>
    <property type="match status" value="1"/>
</dbReference>
<dbReference type="PANTHER" id="PTHR21343">
    <property type="entry name" value="DETHIOBIOTIN SYNTHETASE"/>
    <property type="match status" value="1"/>
</dbReference>
<dbReference type="Pfam" id="PF01656">
    <property type="entry name" value="CbiA"/>
    <property type="match status" value="1"/>
</dbReference>
<dbReference type="Pfam" id="PF07685">
    <property type="entry name" value="GATase_3"/>
    <property type="match status" value="1"/>
</dbReference>
<dbReference type="SUPFAM" id="SSF52317">
    <property type="entry name" value="Class I glutamine amidotransferase-like"/>
    <property type="match status" value="1"/>
</dbReference>
<dbReference type="SUPFAM" id="SSF52540">
    <property type="entry name" value="P-loop containing nucleoside triphosphate hydrolases"/>
    <property type="match status" value="1"/>
</dbReference>
<dbReference type="PROSITE" id="PS51274">
    <property type="entry name" value="GATASE_COBBQ"/>
    <property type="match status" value="1"/>
</dbReference>
<proteinExistence type="inferred from homology"/>
<keyword id="KW-0169">Cobalamin biosynthesis</keyword>
<keyword id="KW-0315">Glutamine amidotransferase</keyword>
<comment type="function">
    <text evidence="1">Catalyzes amidations at positions B, D, E, and G on adenosylcobyrinic A,C-diamide. NH(2) groups are provided by glutamine, and one molecule of ATP is hydrogenolyzed for each amidation.</text>
</comment>
<comment type="pathway">
    <text evidence="1">Cofactor biosynthesis; adenosylcobalamin biosynthesis.</text>
</comment>
<comment type="similarity">
    <text evidence="1">Belongs to the CobB/CobQ family. CobQ subfamily.</text>
</comment>
<gene>
    <name evidence="1" type="primary">cobQ</name>
    <name type="ordered locus">Arad_2802</name>
</gene>
<evidence type="ECO:0000255" key="1">
    <source>
        <dbReference type="HAMAP-Rule" id="MF_00028"/>
    </source>
</evidence>
<reference key="1">
    <citation type="journal article" date="2009" name="J. Bacteriol.">
        <title>Genome sequences of three Agrobacterium biovars help elucidate the evolution of multichromosome genomes in bacteria.</title>
        <authorList>
            <person name="Slater S.C."/>
            <person name="Goldman B.S."/>
            <person name="Goodner B."/>
            <person name="Setubal J.C."/>
            <person name="Farrand S.K."/>
            <person name="Nester E.W."/>
            <person name="Burr T.J."/>
            <person name="Banta L."/>
            <person name="Dickerman A.W."/>
            <person name="Paulsen I."/>
            <person name="Otten L."/>
            <person name="Suen G."/>
            <person name="Welch R."/>
            <person name="Almeida N.F."/>
            <person name="Arnold F."/>
            <person name="Burton O.T."/>
            <person name="Du Z."/>
            <person name="Ewing A."/>
            <person name="Godsy E."/>
            <person name="Heisel S."/>
            <person name="Houmiel K.L."/>
            <person name="Jhaveri J."/>
            <person name="Lu J."/>
            <person name="Miller N.M."/>
            <person name="Norton S."/>
            <person name="Chen Q."/>
            <person name="Phoolcharoen W."/>
            <person name="Ohlin V."/>
            <person name="Ondrusek D."/>
            <person name="Pride N."/>
            <person name="Stricklin S.L."/>
            <person name="Sun J."/>
            <person name="Wheeler C."/>
            <person name="Wilson L."/>
            <person name="Zhu H."/>
            <person name="Wood D.W."/>
        </authorList>
    </citation>
    <scope>NUCLEOTIDE SEQUENCE [LARGE SCALE GENOMIC DNA]</scope>
    <source>
        <strain>K84 / ATCC BAA-868</strain>
    </source>
</reference>
<protein>
    <recommendedName>
        <fullName evidence="1">Cobyric acid synthase</fullName>
    </recommendedName>
</protein>